<proteinExistence type="inferred from homology"/>
<sequence>MTFVSDLFAIALGGSIGAVLRYLITLTVVSAPLSGWLTLHGSVGTTLANLLGCCALGGLFQFSQALVASDWVATGWAASLAHPRTLLAVRIGVLGSLTTFSTLIGETAVFASQGRILASSMLLGINVIAGWCLFWAAAAVVRNWTS</sequence>
<reference key="1">
    <citation type="journal article" date="2003" name="Proc. Natl. Acad. Sci. U.S.A.">
        <title>Complete genome sequence of the marine planctomycete Pirellula sp. strain 1.</title>
        <authorList>
            <person name="Gloeckner F.O."/>
            <person name="Kube M."/>
            <person name="Bauer M."/>
            <person name="Teeling H."/>
            <person name="Lombardot T."/>
            <person name="Ludwig W."/>
            <person name="Gade D."/>
            <person name="Beck A."/>
            <person name="Borzym K."/>
            <person name="Heitmann K."/>
            <person name="Rabus R."/>
            <person name="Schlesner H."/>
            <person name="Amann R."/>
            <person name="Reinhardt R."/>
        </authorList>
    </citation>
    <scope>NUCLEOTIDE SEQUENCE [LARGE SCALE GENOMIC DNA]</scope>
    <source>
        <strain>DSM 10527 / NCIMB 13988 / SH1</strain>
    </source>
</reference>
<comment type="function">
    <text evidence="1">Fluoride-specific ion channel. Important for reducing fluoride concentration in the cell, thus reducing its toxicity.</text>
</comment>
<comment type="catalytic activity">
    <reaction evidence="1">
        <text>fluoride(in) = fluoride(out)</text>
        <dbReference type="Rhea" id="RHEA:76159"/>
        <dbReference type="ChEBI" id="CHEBI:17051"/>
    </reaction>
    <physiologicalReaction direction="left-to-right" evidence="1">
        <dbReference type="Rhea" id="RHEA:76160"/>
    </physiologicalReaction>
</comment>
<comment type="activity regulation">
    <text evidence="1">Na(+) is not transported, but it plays an essential structural role and its presence is essential for fluoride channel function.</text>
</comment>
<comment type="subcellular location">
    <subcellularLocation>
        <location evidence="1">Cell inner membrane</location>
        <topology evidence="1">Multi-pass membrane protein</topology>
    </subcellularLocation>
</comment>
<comment type="similarity">
    <text evidence="1">Belongs to the fluoride channel Fluc/FEX (TC 1.A.43) family.</text>
</comment>
<comment type="sequence caution" evidence="2">
    <conflict type="erroneous initiation">
        <sequence resource="EMBL-CDS" id="CAD77849"/>
    </conflict>
</comment>
<feature type="chain" id="PRO_0000110164" description="Fluoride-specific ion channel FluC">
    <location>
        <begin position="1"/>
        <end position="146"/>
    </location>
</feature>
<feature type="transmembrane region" description="Helical" evidence="1">
    <location>
        <begin position="8"/>
        <end position="28"/>
    </location>
</feature>
<feature type="transmembrane region" description="Helical" evidence="1">
    <location>
        <begin position="47"/>
        <end position="67"/>
    </location>
</feature>
<feature type="transmembrane region" description="Helical" evidence="1">
    <location>
        <begin position="91"/>
        <end position="111"/>
    </location>
</feature>
<feature type="transmembrane region" description="Helical" evidence="1">
    <location>
        <begin position="121"/>
        <end position="141"/>
    </location>
</feature>
<feature type="binding site" evidence="1">
    <location>
        <position position="95"/>
    </location>
    <ligand>
        <name>Na(+)</name>
        <dbReference type="ChEBI" id="CHEBI:29101"/>
        <note>structural</note>
    </ligand>
</feature>
<feature type="binding site" evidence="1">
    <location>
        <position position="98"/>
    </location>
    <ligand>
        <name>Na(+)</name>
        <dbReference type="ChEBI" id="CHEBI:29101"/>
        <note>structural</note>
    </ligand>
</feature>
<organism>
    <name type="scientific">Rhodopirellula baltica (strain DSM 10527 / NCIMB 13988 / SH1)</name>
    <dbReference type="NCBI Taxonomy" id="243090"/>
    <lineage>
        <taxon>Bacteria</taxon>
        <taxon>Pseudomonadati</taxon>
        <taxon>Planctomycetota</taxon>
        <taxon>Planctomycetia</taxon>
        <taxon>Pirellulales</taxon>
        <taxon>Pirellulaceae</taxon>
        <taxon>Rhodopirellula</taxon>
    </lineage>
</organism>
<protein>
    <recommendedName>
        <fullName evidence="1">Fluoride-specific ion channel FluC</fullName>
    </recommendedName>
</protein>
<evidence type="ECO:0000255" key="1">
    <source>
        <dbReference type="HAMAP-Rule" id="MF_00454"/>
    </source>
</evidence>
<evidence type="ECO:0000305" key="2"/>
<keyword id="KW-0997">Cell inner membrane</keyword>
<keyword id="KW-1003">Cell membrane</keyword>
<keyword id="KW-0407">Ion channel</keyword>
<keyword id="KW-0406">Ion transport</keyword>
<keyword id="KW-0472">Membrane</keyword>
<keyword id="KW-0479">Metal-binding</keyword>
<keyword id="KW-1185">Reference proteome</keyword>
<keyword id="KW-0915">Sodium</keyword>
<keyword id="KW-0812">Transmembrane</keyword>
<keyword id="KW-1133">Transmembrane helix</keyword>
<keyword id="KW-0813">Transport</keyword>
<name>FLUC_RHOBA</name>
<accession>Q7UHW8</accession>
<dbReference type="EMBL" id="BX294155">
    <property type="protein sequence ID" value="CAD77849.1"/>
    <property type="status" value="ALT_INIT"/>
    <property type="molecule type" value="Genomic_DNA"/>
</dbReference>
<dbReference type="RefSeq" id="NP_870772.1">
    <property type="nucleotide sequence ID" value="NC_005027.1"/>
</dbReference>
<dbReference type="SMR" id="Q7UHW8"/>
<dbReference type="FunCoup" id="Q7UHW8">
    <property type="interactions" value="235"/>
</dbReference>
<dbReference type="STRING" id="243090.RB12907"/>
<dbReference type="EnsemblBacteria" id="CAD77849">
    <property type="protein sequence ID" value="CAD77849"/>
    <property type="gene ID" value="RB12907"/>
</dbReference>
<dbReference type="KEGG" id="rba:RB12907"/>
<dbReference type="PATRIC" id="fig|243090.15.peg.6256"/>
<dbReference type="eggNOG" id="COG0239">
    <property type="taxonomic scope" value="Bacteria"/>
</dbReference>
<dbReference type="HOGENOM" id="CLU_1214040_0_0_0"/>
<dbReference type="InParanoid" id="Q7UHW8"/>
<dbReference type="OrthoDB" id="9815830at2"/>
<dbReference type="Proteomes" id="UP000001025">
    <property type="component" value="Chromosome"/>
</dbReference>
<dbReference type="GO" id="GO:0005886">
    <property type="term" value="C:plasma membrane"/>
    <property type="evidence" value="ECO:0000318"/>
    <property type="project" value="GO_Central"/>
</dbReference>
<dbReference type="GO" id="GO:0062054">
    <property type="term" value="F:fluoride channel activity"/>
    <property type="evidence" value="ECO:0007669"/>
    <property type="project" value="UniProtKB-UniRule"/>
</dbReference>
<dbReference type="GO" id="GO:1903425">
    <property type="term" value="F:fluoride transmembrane transporter activity"/>
    <property type="evidence" value="ECO:0000318"/>
    <property type="project" value="GO_Central"/>
</dbReference>
<dbReference type="GO" id="GO:0046872">
    <property type="term" value="F:metal ion binding"/>
    <property type="evidence" value="ECO:0007669"/>
    <property type="project" value="UniProtKB-KW"/>
</dbReference>
<dbReference type="GO" id="GO:0140114">
    <property type="term" value="P:cellular detoxification of fluoride"/>
    <property type="evidence" value="ECO:0007669"/>
    <property type="project" value="UniProtKB-UniRule"/>
</dbReference>
<dbReference type="GO" id="GO:1903424">
    <property type="term" value="P:fluoride transmembrane transport"/>
    <property type="evidence" value="ECO:0000318"/>
    <property type="project" value="GO_Central"/>
</dbReference>
<dbReference type="HAMAP" id="MF_00454">
    <property type="entry name" value="FluC"/>
    <property type="match status" value="1"/>
</dbReference>
<dbReference type="InterPro" id="IPR003691">
    <property type="entry name" value="FluC"/>
</dbReference>
<dbReference type="PANTHER" id="PTHR28259">
    <property type="entry name" value="FLUORIDE EXPORT PROTEIN 1-RELATED"/>
    <property type="match status" value="1"/>
</dbReference>
<dbReference type="PANTHER" id="PTHR28259:SF18">
    <property type="entry name" value="FLUORIDE-SPECIFIC ION CHANNEL FLUC"/>
    <property type="match status" value="1"/>
</dbReference>
<dbReference type="Pfam" id="PF02537">
    <property type="entry name" value="CRCB"/>
    <property type="match status" value="1"/>
</dbReference>
<gene>
    <name evidence="1" type="primary">fluC</name>
    <name evidence="1" type="synonym">crcB</name>
    <name type="ordered locus">RB12907</name>
</gene>